<accession>Q6N6M5</accession>
<evidence type="ECO:0000255" key="1">
    <source>
        <dbReference type="HAMAP-Rule" id="MF_01520"/>
    </source>
</evidence>
<comment type="function">
    <text evidence="1">Bifunctional enzyme that catalyzes the formation of 4-diphosphocytidyl-2-C-methyl-D-erythritol from CTP and 2-C-methyl-D-erythritol 4-phosphate (MEP) (IspD), and catalyzes the conversion of 4-diphosphocytidyl-2-C-methyl-D-erythritol 2-phosphate (CDP-ME2P) to 2-C-methyl-D-erythritol 2,4-cyclodiphosphate (ME-CPP) with a corresponding release of cytidine 5-monophosphate (CMP) (IspF).</text>
</comment>
<comment type="catalytic activity">
    <reaction evidence="1">
        <text>2-C-methyl-D-erythritol 4-phosphate + CTP + H(+) = 4-CDP-2-C-methyl-D-erythritol + diphosphate</text>
        <dbReference type="Rhea" id="RHEA:13429"/>
        <dbReference type="ChEBI" id="CHEBI:15378"/>
        <dbReference type="ChEBI" id="CHEBI:33019"/>
        <dbReference type="ChEBI" id="CHEBI:37563"/>
        <dbReference type="ChEBI" id="CHEBI:57823"/>
        <dbReference type="ChEBI" id="CHEBI:58262"/>
        <dbReference type="EC" id="2.7.7.60"/>
    </reaction>
</comment>
<comment type="catalytic activity">
    <reaction evidence="1">
        <text>4-CDP-2-C-methyl-D-erythritol 2-phosphate = 2-C-methyl-D-erythritol 2,4-cyclic diphosphate + CMP</text>
        <dbReference type="Rhea" id="RHEA:23864"/>
        <dbReference type="ChEBI" id="CHEBI:57919"/>
        <dbReference type="ChEBI" id="CHEBI:58483"/>
        <dbReference type="ChEBI" id="CHEBI:60377"/>
        <dbReference type="EC" id="4.6.1.12"/>
    </reaction>
</comment>
<comment type="cofactor">
    <cofactor evidence="1">
        <name>a divalent metal cation</name>
        <dbReference type="ChEBI" id="CHEBI:60240"/>
    </cofactor>
</comment>
<comment type="pathway">
    <text evidence="1">Isoprenoid biosynthesis; isopentenyl diphosphate biosynthesis via DXP pathway; isopentenyl diphosphate from 1-deoxy-D-xylulose 5-phosphate: step 2/6.</text>
</comment>
<comment type="pathway">
    <text evidence="1">Isoprenoid biosynthesis; isopentenyl diphosphate biosynthesis via DXP pathway; isopentenyl diphosphate from 1-deoxy-D-xylulose 5-phosphate: step 4/6.</text>
</comment>
<comment type="similarity">
    <text evidence="1">In the N-terminal section; belongs to the IspD/TarI cytidylyltransferase family. IspD subfamily.</text>
</comment>
<comment type="similarity">
    <text evidence="1">In the C-terminal section; belongs to the IspF family.</text>
</comment>
<gene>
    <name evidence="1" type="primary">ispDF</name>
    <name type="synonym">ispD</name>
    <name type="ordered locus">RPA2590</name>
</gene>
<reference key="1">
    <citation type="journal article" date="2004" name="Nat. Biotechnol.">
        <title>Complete genome sequence of the metabolically versatile photosynthetic bacterium Rhodopseudomonas palustris.</title>
        <authorList>
            <person name="Larimer F.W."/>
            <person name="Chain P."/>
            <person name="Hauser L."/>
            <person name="Lamerdin J.E."/>
            <person name="Malfatti S."/>
            <person name="Do L."/>
            <person name="Land M.L."/>
            <person name="Pelletier D.A."/>
            <person name="Beatty J.T."/>
            <person name="Lang A.S."/>
            <person name="Tabita F.R."/>
            <person name="Gibson J.L."/>
            <person name="Hanson T.E."/>
            <person name="Bobst C."/>
            <person name="Torres y Torres J.L."/>
            <person name="Peres C."/>
            <person name="Harrison F.H."/>
            <person name="Gibson J."/>
            <person name="Harwood C.S."/>
        </authorList>
    </citation>
    <scope>NUCLEOTIDE SEQUENCE [LARGE SCALE GENOMIC DNA]</scope>
    <source>
        <strain>ATCC BAA-98 / CGA009</strain>
    </source>
</reference>
<proteinExistence type="inferred from homology"/>
<sequence>MTNSPRTAAIIVAAGRGLRAGAGGPKQYRSLAGRPVIARAMEPFCTHPGVMAVQPVTNPDDTEMFNAAVAGLNFRPAVGGGATRQASVRAGLEALAELKPDIVLIHDAARCFVTPELISRAITAAGATGAALPVVPVTDTIKQVDSSGAVDATPDRASLRIAQTPQAFRFDVILDAHRRAASGGRDDFTDDAAIAEWAGLTVSTFEGDANNMKMTTPEDFAREESRLMAALGDIRTGTGYDVHAFGEGDHVWLCGLKVPHTRGFLAHSDGDVGLHALVDAILGALADGDIGSHFPPTDPQWKGAASDKFLKYAIDRVTARGGRVANLEVTMICERPKIGPLRDAMRQRIAEITGVPVSRVAVKATTSEKLGFTGREEGIAATASATIRLPWGADGLAG</sequence>
<name>ISPDF_RHOPA</name>
<protein>
    <recommendedName>
        <fullName evidence="1">Bifunctional enzyme IspD/IspF</fullName>
    </recommendedName>
    <domain>
        <recommendedName>
            <fullName evidence="1">2-C-methyl-D-erythritol 4-phosphate cytidylyltransferase</fullName>
            <ecNumber evidence="1">2.7.7.60</ecNumber>
        </recommendedName>
        <alternativeName>
            <fullName evidence="1">4-diphosphocytidyl-2C-methyl-D-erythritol synthase</fullName>
        </alternativeName>
        <alternativeName>
            <fullName evidence="1">MEP cytidylyltransferase</fullName>
            <shortName evidence="1">MCT</shortName>
        </alternativeName>
    </domain>
    <domain>
        <recommendedName>
            <fullName evidence="1">2-C-methyl-D-erythritol 2,4-cyclodiphosphate synthase</fullName>
            <shortName evidence="1">MECDP-synthase</shortName>
            <shortName evidence="1">MECPP-synthase</shortName>
            <shortName evidence="1">MECPS</shortName>
            <ecNumber evidence="1">4.6.1.12</ecNumber>
        </recommendedName>
    </domain>
</protein>
<organism>
    <name type="scientific">Rhodopseudomonas palustris (strain ATCC BAA-98 / CGA009)</name>
    <dbReference type="NCBI Taxonomy" id="258594"/>
    <lineage>
        <taxon>Bacteria</taxon>
        <taxon>Pseudomonadati</taxon>
        <taxon>Pseudomonadota</taxon>
        <taxon>Alphaproteobacteria</taxon>
        <taxon>Hyphomicrobiales</taxon>
        <taxon>Nitrobacteraceae</taxon>
        <taxon>Rhodopseudomonas</taxon>
    </lineage>
</organism>
<feature type="chain" id="PRO_0000075676" description="Bifunctional enzyme IspD/IspF">
    <location>
        <begin position="1"/>
        <end position="398"/>
    </location>
</feature>
<feature type="region of interest" description="2-C-methyl-D-erythritol 4-phosphate cytidylyltransferase" evidence="1">
    <location>
        <begin position="1"/>
        <end position="234"/>
    </location>
</feature>
<feature type="region of interest" description="2-C-methyl-D-erythritol 2,4-cyclodiphosphate synthase" evidence="1">
    <location>
        <begin position="235"/>
        <end position="398"/>
    </location>
</feature>
<feature type="binding site" evidence="1">
    <location>
        <begin position="241"/>
        <end position="243"/>
    </location>
    <ligand>
        <name>4-CDP-2-C-methyl-D-erythritol 2-phosphate</name>
        <dbReference type="ChEBI" id="CHEBI:57919"/>
    </ligand>
</feature>
<feature type="binding site" evidence="1">
    <location>
        <position position="241"/>
    </location>
    <ligand>
        <name>a divalent metal cation</name>
        <dbReference type="ChEBI" id="CHEBI:60240"/>
    </ligand>
</feature>
<feature type="binding site" evidence="1">
    <location>
        <position position="243"/>
    </location>
    <ligand>
        <name>a divalent metal cation</name>
        <dbReference type="ChEBI" id="CHEBI:60240"/>
    </ligand>
</feature>
<feature type="binding site" evidence="1">
    <location>
        <begin position="267"/>
        <end position="268"/>
    </location>
    <ligand>
        <name>4-CDP-2-C-methyl-D-erythritol 2-phosphate</name>
        <dbReference type="ChEBI" id="CHEBI:57919"/>
    </ligand>
</feature>
<feature type="binding site" evidence="1">
    <location>
        <position position="275"/>
    </location>
    <ligand>
        <name>a divalent metal cation</name>
        <dbReference type="ChEBI" id="CHEBI:60240"/>
    </ligand>
</feature>
<feature type="binding site" evidence="1">
    <location>
        <begin position="289"/>
        <end position="291"/>
    </location>
    <ligand>
        <name>4-CDP-2-C-methyl-D-erythritol 2-phosphate</name>
        <dbReference type="ChEBI" id="CHEBI:57919"/>
    </ligand>
</feature>
<feature type="binding site" evidence="1">
    <location>
        <begin position="365"/>
        <end position="368"/>
    </location>
    <ligand>
        <name>4-CDP-2-C-methyl-D-erythritol 2-phosphate</name>
        <dbReference type="ChEBI" id="CHEBI:57919"/>
    </ligand>
</feature>
<feature type="binding site" evidence="1">
    <location>
        <position position="372"/>
    </location>
    <ligand>
        <name>4-CDP-2-C-methyl-D-erythritol 2-phosphate</name>
        <dbReference type="ChEBI" id="CHEBI:57919"/>
    </ligand>
</feature>
<feature type="binding site" evidence="1">
    <location>
        <position position="375"/>
    </location>
    <ligand>
        <name>4-CDP-2-C-methyl-D-erythritol 2-phosphate</name>
        <dbReference type="ChEBI" id="CHEBI:57919"/>
    </ligand>
</feature>
<feature type="site" description="Transition state stabilizer" evidence="1">
    <location>
        <position position="19"/>
    </location>
</feature>
<feature type="site" description="Transition state stabilizer" evidence="1">
    <location>
        <position position="26"/>
    </location>
</feature>
<feature type="site" description="Positions MEP for the nucleophilic attack" evidence="1">
    <location>
        <position position="156"/>
    </location>
</feature>
<feature type="site" description="Positions MEP for the nucleophilic attack" evidence="1">
    <location>
        <position position="213"/>
    </location>
</feature>
<feature type="site" description="Transition state stabilizer" evidence="1">
    <location>
        <position position="267"/>
    </location>
</feature>
<feature type="site" description="Transition state stabilizer" evidence="1">
    <location>
        <position position="366"/>
    </location>
</feature>
<dbReference type="EC" id="2.7.7.60" evidence="1"/>
<dbReference type="EC" id="4.6.1.12" evidence="1"/>
<dbReference type="EMBL" id="BX572601">
    <property type="protein sequence ID" value="CAE28031.1"/>
    <property type="molecule type" value="Genomic_DNA"/>
</dbReference>
<dbReference type="RefSeq" id="WP_011158140.1">
    <property type="nucleotide sequence ID" value="NZ_CP116810.1"/>
</dbReference>
<dbReference type="SMR" id="Q6N6M5"/>
<dbReference type="STRING" id="258594.RPA2590"/>
<dbReference type="GeneID" id="66893659"/>
<dbReference type="eggNOG" id="COG0245">
    <property type="taxonomic scope" value="Bacteria"/>
</dbReference>
<dbReference type="eggNOG" id="COG1211">
    <property type="taxonomic scope" value="Bacteria"/>
</dbReference>
<dbReference type="HOGENOM" id="CLU_042800_2_3_5"/>
<dbReference type="PhylomeDB" id="Q6N6M5"/>
<dbReference type="UniPathway" id="UPA00056">
    <property type="reaction ID" value="UER00093"/>
</dbReference>
<dbReference type="UniPathway" id="UPA00056">
    <property type="reaction ID" value="UER00095"/>
</dbReference>
<dbReference type="GO" id="GO:0008685">
    <property type="term" value="F:2-C-methyl-D-erythritol 2,4-cyclodiphosphate synthase activity"/>
    <property type="evidence" value="ECO:0007669"/>
    <property type="project" value="UniProtKB-UniRule"/>
</dbReference>
<dbReference type="GO" id="GO:0050518">
    <property type="term" value="F:2-C-methyl-D-erythritol 4-phosphate cytidylyltransferase activity"/>
    <property type="evidence" value="ECO:0007669"/>
    <property type="project" value="UniProtKB-UniRule"/>
</dbReference>
<dbReference type="GO" id="GO:0046872">
    <property type="term" value="F:metal ion binding"/>
    <property type="evidence" value="ECO:0007669"/>
    <property type="project" value="UniProtKB-KW"/>
</dbReference>
<dbReference type="GO" id="GO:0019288">
    <property type="term" value="P:isopentenyl diphosphate biosynthetic process, methylerythritol 4-phosphate pathway"/>
    <property type="evidence" value="ECO:0007669"/>
    <property type="project" value="UniProtKB-UniRule"/>
</dbReference>
<dbReference type="GO" id="GO:0016114">
    <property type="term" value="P:terpenoid biosynthetic process"/>
    <property type="evidence" value="ECO:0007669"/>
    <property type="project" value="InterPro"/>
</dbReference>
<dbReference type="CDD" id="cd02516">
    <property type="entry name" value="CDP-ME_synthetase"/>
    <property type="match status" value="1"/>
</dbReference>
<dbReference type="CDD" id="cd00554">
    <property type="entry name" value="MECDP_synthase"/>
    <property type="match status" value="1"/>
</dbReference>
<dbReference type="FunFam" id="3.90.550.10:FF:000003">
    <property type="entry name" value="2-C-methyl-D-erythritol 4-phosphate cytidylyltransferase"/>
    <property type="match status" value="1"/>
</dbReference>
<dbReference type="Gene3D" id="3.30.1330.50">
    <property type="entry name" value="2-C-methyl-D-erythritol 2,4-cyclodiphosphate synthase"/>
    <property type="match status" value="1"/>
</dbReference>
<dbReference type="Gene3D" id="3.90.550.10">
    <property type="entry name" value="Spore Coat Polysaccharide Biosynthesis Protein SpsA, Chain A"/>
    <property type="match status" value="1"/>
</dbReference>
<dbReference type="HAMAP" id="MF_00108">
    <property type="entry name" value="IspD"/>
    <property type="match status" value="1"/>
</dbReference>
<dbReference type="HAMAP" id="MF_01520">
    <property type="entry name" value="IspDF"/>
    <property type="match status" value="1"/>
</dbReference>
<dbReference type="HAMAP" id="MF_00107">
    <property type="entry name" value="IspF"/>
    <property type="match status" value="1"/>
</dbReference>
<dbReference type="InterPro" id="IPR001228">
    <property type="entry name" value="IspD"/>
</dbReference>
<dbReference type="InterPro" id="IPR026596">
    <property type="entry name" value="IspD/F"/>
</dbReference>
<dbReference type="InterPro" id="IPR034683">
    <property type="entry name" value="IspD/TarI"/>
</dbReference>
<dbReference type="InterPro" id="IPR018294">
    <property type="entry name" value="ISPD_synthase_CS"/>
</dbReference>
<dbReference type="InterPro" id="IPR003526">
    <property type="entry name" value="MECDP_synthase"/>
</dbReference>
<dbReference type="InterPro" id="IPR020555">
    <property type="entry name" value="MECDP_synthase_CS"/>
</dbReference>
<dbReference type="InterPro" id="IPR036571">
    <property type="entry name" value="MECDP_synthase_sf"/>
</dbReference>
<dbReference type="InterPro" id="IPR029044">
    <property type="entry name" value="Nucleotide-diphossugar_trans"/>
</dbReference>
<dbReference type="NCBIfam" id="TIGR00453">
    <property type="entry name" value="ispD"/>
    <property type="match status" value="1"/>
</dbReference>
<dbReference type="NCBIfam" id="TIGR00151">
    <property type="entry name" value="ispF"/>
    <property type="match status" value="1"/>
</dbReference>
<dbReference type="NCBIfam" id="NF006899">
    <property type="entry name" value="PRK09382.1"/>
    <property type="match status" value="1"/>
</dbReference>
<dbReference type="PANTHER" id="PTHR43181">
    <property type="entry name" value="2-C-METHYL-D-ERYTHRITOL 2,4-CYCLODIPHOSPHATE SYNTHASE, CHLOROPLASTIC"/>
    <property type="match status" value="1"/>
</dbReference>
<dbReference type="PANTHER" id="PTHR43181:SF1">
    <property type="entry name" value="2-C-METHYL-D-ERYTHRITOL 2,4-CYCLODIPHOSPHATE SYNTHASE, CHLOROPLASTIC"/>
    <property type="match status" value="1"/>
</dbReference>
<dbReference type="Pfam" id="PF01128">
    <property type="entry name" value="IspD"/>
    <property type="match status" value="1"/>
</dbReference>
<dbReference type="Pfam" id="PF02542">
    <property type="entry name" value="YgbB"/>
    <property type="match status" value="1"/>
</dbReference>
<dbReference type="SUPFAM" id="SSF69765">
    <property type="entry name" value="IpsF-like"/>
    <property type="match status" value="1"/>
</dbReference>
<dbReference type="SUPFAM" id="SSF53448">
    <property type="entry name" value="Nucleotide-diphospho-sugar transferases"/>
    <property type="match status" value="1"/>
</dbReference>
<dbReference type="PROSITE" id="PS01295">
    <property type="entry name" value="ISPD"/>
    <property type="match status" value="1"/>
</dbReference>
<dbReference type="PROSITE" id="PS01350">
    <property type="entry name" value="ISPF"/>
    <property type="match status" value="1"/>
</dbReference>
<keyword id="KW-0414">Isoprene biosynthesis</keyword>
<keyword id="KW-0456">Lyase</keyword>
<keyword id="KW-0479">Metal-binding</keyword>
<keyword id="KW-0511">Multifunctional enzyme</keyword>
<keyword id="KW-0548">Nucleotidyltransferase</keyword>
<keyword id="KW-0808">Transferase</keyword>